<name>O164_CONTE</name>
<feature type="signal peptide" evidence="3">
    <location>
        <begin position="1"/>
        <end position="22"/>
    </location>
</feature>
<feature type="propeptide" id="PRO_0000034956" evidence="1">
    <location>
        <begin position="23"/>
        <end position="52"/>
    </location>
</feature>
<feature type="peptide" id="PRO_0000034957" description="Omega-conotoxin-like TxO4" evidence="4">
    <location>
        <begin position="53"/>
        <end position="81"/>
    </location>
</feature>
<feature type="peptide" id="PRO_0000445112" description="Truncated TxO4" evidence="6">
    <location>
        <begin position="65"/>
        <end position="81"/>
    </location>
</feature>
<feature type="modified residue" description="4-hydroxyproline; partial" evidence="4">
    <location>
        <position position="70"/>
    </location>
</feature>
<feature type="modified residue" description="6'-bromotryptophan; partial" evidence="4">
    <location>
        <position position="75"/>
    </location>
</feature>
<feature type="disulfide bond" evidence="2">
    <location>
        <begin position="55"/>
        <end position="72"/>
    </location>
</feature>
<feature type="disulfide bond" evidence="2">
    <location>
        <begin position="62"/>
        <end position="76"/>
    </location>
</feature>
<feature type="disulfide bond" evidence="2">
    <location>
        <begin position="71"/>
        <end position="80"/>
    </location>
</feature>
<feature type="sequence conflict" description="In Ref. 2; AAF07981." evidence="5" ref="2">
    <original>VV</original>
    <variation>MM</variation>
    <location>
        <begin position="6"/>
        <end position="7"/>
    </location>
</feature>
<protein>
    <recommendedName>
        <fullName>Omega-conotoxin-like TxO4</fullName>
    </recommendedName>
    <alternativeName>
        <fullName>Conotoxin TxMKLT1-0221</fullName>
    </alternativeName>
    <component>
        <recommendedName>
            <fullName evidence="5">Truncated TxO4</fullName>
        </recommendedName>
    </component>
</protein>
<reference key="1">
    <citation type="journal article" date="1999" name="Peptides">
        <title>Conopeptides from Conus striatus and Conus textile by cDNA cloning.</title>
        <authorList>
            <person name="Lu B.-S."/>
            <person name="Yu F."/>
            <person name="Zhao D."/>
            <person name="Huang P.-T."/>
            <person name="Huang C.-F."/>
        </authorList>
    </citation>
    <scope>NUCLEOTIDE SEQUENCE [MRNA]</scope>
    <source>
        <tissue>Venom duct</tissue>
    </source>
</reference>
<reference key="2">
    <citation type="journal article" date="2001" name="Mol. Biol. Evol.">
        <title>Mechanisms for evolving hypervariability: the case of conopeptides.</title>
        <authorList>
            <person name="Conticello S.G."/>
            <person name="Gilad Y."/>
            <person name="Avidan N."/>
            <person name="Ben-Asher E."/>
            <person name="Levy Z."/>
            <person name="Fainzilber M."/>
        </authorList>
    </citation>
    <scope>NUCLEOTIDE SEQUENCE [MRNA]</scope>
</reference>
<reference key="3">
    <citation type="journal article" date="2012" name="J. Proteome Res.">
        <title>Constrained de novo sequencing of conotoxins.</title>
        <authorList>
            <person name="Bhatia S."/>
            <person name="Kil Y.J."/>
            <person name="Ueberheide B."/>
            <person name="Chait B.T."/>
            <person name="Tayo L."/>
            <person name="Cruz L."/>
            <person name="Lu B."/>
            <person name="Yates J.R. III"/>
            <person name="Bern M."/>
        </authorList>
    </citation>
    <scope>IDENTIFICATION BY MASS SPECTROMETRY</scope>
    <scope>SUBCELLULAR LOCATION</scope>
    <scope>HYDROXYLATION AT PRO-70</scope>
    <scope>BROMINATION AT TRP-75</scope>
    <source>
        <tissue>Venom</tissue>
    </source>
</reference>
<proteinExistence type="evidence at protein level"/>
<keyword id="KW-0102">Bromination</keyword>
<keyword id="KW-0108">Calcium channel impairing toxin</keyword>
<keyword id="KW-1015">Disulfide bond</keyword>
<keyword id="KW-0379">Hydroxylation</keyword>
<keyword id="KW-0872">Ion channel impairing toxin</keyword>
<keyword id="KW-0960">Knottin</keyword>
<keyword id="KW-0528">Neurotoxin</keyword>
<keyword id="KW-0638">Presynaptic neurotoxin</keyword>
<keyword id="KW-0964">Secreted</keyword>
<keyword id="KW-0732">Signal</keyword>
<keyword id="KW-0800">Toxin</keyword>
<keyword id="KW-1218">Voltage-gated calcium channel impairing toxin</keyword>
<evidence type="ECO:0000250" key="1"/>
<evidence type="ECO:0000250" key="2">
    <source>
        <dbReference type="UniProtKB" id="Q26443"/>
    </source>
</evidence>
<evidence type="ECO:0000255" key="3"/>
<evidence type="ECO:0000269" key="4">
    <source>
    </source>
</evidence>
<evidence type="ECO:0000305" key="5"/>
<evidence type="ECO:0000305" key="6">
    <source>
    </source>
</evidence>
<organism>
    <name type="scientific">Conus textile</name>
    <name type="common">Cloth-of-gold cone</name>
    <dbReference type="NCBI Taxonomy" id="6494"/>
    <lineage>
        <taxon>Eukaryota</taxon>
        <taxon>Metazoa</taxon>
        <taxon>Spiralia</taxon>
        <taxon>Lophotrochozoa</taxon>
        <taxon>Mollusca</taxon>
        <taxon>Gastropoda</taxon>
        <taxon>Caenogastropoda</taxon>
        <taxon>Neogastropoda</taxon>
        <taxon>Conoidea</taxon>
        <taxon>Conidae</taxon>
        <taxon>Conus</taxon>
        <taxon>Cylinder</taxon>
    </lineage>
</organism>
<accession>Q9XZL1</accession>
<accession>Q9U646</accession>
<sequence length="81" mass="8959">MKLTCVVIVAVLFLTAWTFVTAVPHSSNALENLYLKARHEMENPEASKLNTRYDCEPPGNFCGMIKIGPPCCSGWCFFACA</sequence>
<comment type="function">
    <text evidence="1">Omega-conotoxins act at presynaptic membranes, they bind and block voltage-gated calcium channels (Cav).</text>
</comment>
<comment type="subcellular location">
    <subcellularLocation>
        <location evidence="4">Secreted</location>
    </subcellularLocation>
</comment>
<comment type="tissue specificity">
    <text evidence="6">Expressed by the venom duct.</text>
</comment>
<comment type="domain">
    <text evidence="2">The presence of a 'disulfide through disulfide knot' structurally defines this protein as a knottin.</text>
</comment>
<comment type="domain">
    <text evidence="5">The cysteine framework is VI/VII (C-C-CC-C-C).</text>
</comment>
<comment type="PTM">
    <text evidence="4">TxO4 is found with and without hydroxyproline and these two forms have a bromotryptophan. Truncated TxO4 is found with and without bromotryptophan, and these two forms have no hydroxyproline.</text>
</comment>
<comment type="similarity">
    <text evidence="5">Belongs to the conotoxin O1 superfamily.</text>
</comment>
<dbReference type="EMBL" id="AF146357">
    <property type="protein sequence ID" value="AAD31917.1"/>
    <property type="molecule type" value="mRNA"/>
</dbReference>
<dbReference type="EMBL" id="AF193270">
    <property type="protein sequence ID" value="AAF07981.1"/>
    <property type="molecule type" value="mRNA"/>
</dbReference>
<dbReference type="SMR" id="Q9XZL1"/>
<dbReference type="ConoServer" id="1103">
    <property type="toxin name" value="TxO4 precursor"/>
</dbReference>
<dbReference type="ConoServer" id="871">
    <property type="toxin name" value="TxO4 precursor"/>
</dbReference>
<dbReference type="GO" id="GO:0005576">
    <property type="term" value="C:extracellular region"/>
    <property type="evidence" value="ECO:0007669"/>
    <property type="project" value="UniProtKB-SubCell"/>
</dbReference>
<dbReference type="GO" id="GO:0044231">
    <property type="term" value="C:host cell presynaptic membrane"/>
    <property type="evidence" value="ECO:0007669"/>
    <property type="project" value="UniProtKB-KW"/>
</dbReference>
<dbReference type="GO" id="GO:0005246">
    <property type="term" value="F:calcium channel regulator activity"/>
    <property type="evidence" value="ECO:0007669"/>
    <property type="project" value="UniProtKB-KW"/>
</dbReference>
<dbReference type="GO" id="GO:0008200">
    <property type="term" value="F:ion channel inhibitor activity"/>
    <property type="evidence" value="ECO:0007669"/>
    <property type="project" value="InterPro"/>
</dbReference>
<dbReference type="GO" id="GO:0090729">
    <property type="term" value="F:toxin activity"/>
    <property type="evidence" value="ECO:0007669"/>
    <property type="project" value="UniProtKB-KW"/>
</dbReference>
<dbReference type="InterPro" id="IPR004214">
    <property type="entry name" value="Conotoxin"/>
</dbReference>
<dbReference type="InterPro" id="IPR012321">
    <property type="entry name" value="Conotoxin_omega-typ_CS"/>
</dbReference>
<dbReference type="Pfam" id="PF02950">
    <property type="entry name" value="Conotoxin"/>
    <property type="match status" value="1"/>
</dbReference>
<dbReference type="PROSITE" id="PS60004">
    <property type="entry name" value="OMEGA_CONOTOXIN"/>
    <property type="match status" value="1"/>
</dbReference>